<organism>
    <name type="scientific">Arabidopsis thaliana</name>
    <name type="common">Mouse-ear cress</name>
    <dbReference type="NCBI Taxonomy" id="3702"/>
    <lineage>
        <taxon>Eukaryota</taxon>
        <taxon>Viridiplantae</taxon>
        <taxon>Streptophyta</taxon>
        <taxon>Embryophyta</taxon>
        <taxon>Tracheophyta</taxon>
        <taxon>Spermatophyta</taxon>
        <taxon>Magnoliopsida</taxon>
        <taxon>eudicotyledons</taxon>
        <taxon>Gunneridae</taxon>
        <taxon>Pentapetalae</taxon>
        <taxon>rosids</taxon>
        <taxon>malvids</taxon>
        <taxon>Brassicales</taxon>
        <taxon>Brassicaceae</taxon>
        <taxon>Camelineae</taxon>
        <taxon>Arabidopsis</taxon>
    </lineage>
</organism>
<evidence type="ECO:0000255" key="1"/>
<evidence type="ECO:0000269" key="2">
    <source>
    </source>
</evidence>
<evidence type="ECO:0000269" key="3">
    <source>
    </source>
</evidence>
<evidence type="ECO:0000269" key="4">
    <source>
    </source>
</evidence>
<evidence type="ECO:0000269" key="5">
    <source>
    </source>
</evidence>
<evidence type="ECO:0000303" key="6">
    <source>
    </source>
</evidence>
<evidence type="ECO:0000305" key="7"/>
<evidence type="ECO:0007829" key="8">
    <source>
        <dbReference type="PDB" id="2Z51"/>
    </source>
</evidence>
<reference key="1">
    <citation type="journal article" date="2003" name="Biochem. J.">
        <title>Iron-sulphur cluster assembly in plants: distinct NFU proteins in mitochondria and plastids from Arabidopsis thaliana.</title>
        <authorList>
            <person name="Leon S."/>
            <person name="Touraine B."/>
            <person name="Ribot C."/>
            <person name="Briat J.-F."/>
            <person name="Lobreaux S."/>
        </authorList>
    </citation>
    <scope>NUCLEOTIDE SEQUENCE [MRNA] (ISOFORM 1)</scope>
    <scope>TISSUE SPECIFICITY</scope>
    <scope>SUBCELLULAR LOCATION</scope>
    <scope>GENE FAMILY</scope>
    <source>
        <strain>cv. Columbia</strain>
    </source>
</reference>
<reference key="2">
    <citation type="journal article" date="2000" name="DNA Res.">
        <title>Structural analysis of Arabidopsis thaliana chromosome 5. X. Sequence features of the regions of 3,076,755 bp covered by sixty P1 and TAC clones.</title>
        <authorList>
            <person name="Sato S."/>
            <person name="Nakamura Y."/>
            <person name="Kaneko T."/>
            <person name="Katoh T."/>
            <person name="Asamizu E."/>
            <person name="Kotani H."/>
            <person name="Tabata S."/>
        </authorList>
    </citation>
    <scope>NUCLEOTIDE SEQUENCE [LARGE SCALE GENOMIC DNA]</scope>
    <source>
        <strain>cv. Columbia</strain>
    </source>
</reference>
<reference key="3">
    <citation type="journal article" date="2017" name="Plant J.">
        <title>Araport11: a complete reannotation of the Arabidopsis thaliana reference genome.</title>
        <authorList>
            <person name="Cheng C.Y."/>
            <person name="Krishnakumar V."/>
            <person name="Chan A.P."/>
            <person name="Thibaud-Nissen F."/>
            <person name="Schobel S."/>
            <person name="Town C.D."/>
        </authorList>
    </citation>
    <scope>GENOME REANNOTATION</scope>
    <source>
        <strain>cv. Columbia</strain>
    </source>
</reference>
<reference key="4">
    <citation type="journal article" date="2002" name="Science">
        <title>Functional annotation of a full-length Arabidopsis cDNA collection.</title>
        <authorList>
            <person name="Seki M."/>
            <person name="Narusaka M."/>
            <person name="Kamiya A."/>
            <person name="Ishida J."/>
            <person name="Satou M."/>
            <person name="Sakurai T."/>
            <person name="Nakajima M."/>
            <person name="Enju A."/>
            <person name="Akiyama K."/>
            <person name="Oono Y."/>
            <person name="Muramatsu M."/>
            <person name="Hayashizaki Y."/>
            <person name="Kawai J."/>
            <person name="Carninci P."/>
            <person name="Itoh M."/>
            <person name="Ishii Y."/>
            <person name="Arakawa T."/>
            <person name="Shibata K."/>
            <person name="Shinagawa A."/>
            <person name="Shinozaki K."/>
        </authorList>
    </citation>
    <scope>NUCLEOTIDE SEQUENCE [LARGE SCALE MRNA] (ISOFORM 1)</scope>
    <source>
        <strain>cv. Columbia</strain>
    </source>
</reference>
<reference key="5">
    <citation type="journal article" date="2003" name="Science">
        <title>Empirical analysis of transcriptional activity in the Arabidopsis genome.</title>
        <authorList>
            <person name="Yamada K."/>
            <person name="Lim J."/>
            <person name="Dale J.M."/>
            <person name="Chen H."/>
            <person name="Shinn P."/>
            <person name="Palm C.J."/>
            <person name="Southwick A.M."/>
            <person name="Wu H.C."/>
            <person name="Kim C.J."/>
            <person name="Nguyen M."/>
            <person name="Pham P.K."/>
            <person name="Cheuk R.F."/>
            <person name="Karlin-Newmann G."/>
            <person name="Liu S.X."/>
            <person name="Lam B."/>
            <person name="Sakano H."/>
            <person name="Wu T."/>
            <person name="Yu G."/>
            <person name="Miranda M."/>
            <person name="Quach H.L."/>
            <person name="Tripp M."/>
            <person name="Chang C.H."/>
            <person name="Lee J.M."/>
            <person name="Toriumi M.J."/>
            <person name="Chan M.M."/>
            <person name="Tang C.C."/>
            <person name="Onodera C.S."/>
            <person name="Deng J.M."/>
            <person name="Akiyama K."/>
            <person name="Ansari Y."/>
            <person name="Arakawa T."/>
            <person name="Banh J."/>
            <person name="Banno F."/>
            <person name="Bowser L."/>
            <person name="Brooks S.Y."/>
            <person name="Carninci P."/>
            <person name="Chao Q."/>
            <person name="Choy N."/>
            <person name="Enju A."/>
            <person name="Goldsmith A.D."/>
            <person name="Gurjal M."/>
            <person name="Hansen N.F."/>
            <person name="Hayashizaki Y."/>
            <person name="Johnson-Hopson C."/>
            <person name="Hsuan V.W."/>
            <person name="Iida K."/>
            <person name="Karnes M."/>
            <person name="Khan S."/>
            <person name="Koesema E."/>
            <person name="Ishida J."/>
            <person name="Jiang P.X."/>
            <person name="Jones T."/>
            <person name="Kawai J."/>
            <person name="Kamiya A."/>
            <person name="Meyers C."/>
            <person name="Nakajima M."/>
            <person name="Narusaka M."/>
            <person name="Seki M."/>
            <person name="Sakurai T."/>
            <person name="Satou M."/>
            <person name="Tamse R."/>
            <person name="Vaysberg M."/>
            <person name="Wallender E.K."/>
            <person name="Wong C."/>
            <person name="Yamamura Y."/>
            <person name="Yuan S."/>
            <person name="Shinozaki K."/>
            <person name="Davis R.W."/>
            <person name="Theologis A."/>
            <person name="Ecker J.R."/>
        </authorList>
    </citation>
    <scope>NUCLEOTIDE SEQUENCE [LARGE SCALE MRNA] (ISOFORM 1)</scope>
    <source>
        <strain>cv. Columbia</strain>
    </source>
</reference>
<reference key="6">
    <citation type="journal article" date="2009" name="DNA Res.">
        <title>Analysis of multiple occurrences of alternative splicing events in Arabidopsis thaliana using novel sequenced full-length cDNAs.</title>
        <authorList>
            <person name="Iida K."/>
            <person name="Fukami-Kobayashi K."/>
            <person name="Toyoda A."/>
            <person name="Sakaki Y."/>
            <person name="Kobayashi M."/>
            <person name="Seki M."/>
            <person name="Shinozaki K."/>
        </authorList>
    </citation>
    <scope>NUCLEOTIDE SEQUENCE [LARGE SCALE MRNA] (ISOFORM 2)</scope>
    <source>
        <strain>cv. Columbia</strain>
    </source>
</reference>
<reference key="7">
    <citation type="journal article" date="2004" name="Plant Cell">
        <title>The Arabidopsis chloroplastic NifU-like protein CnfU, which can act as an iron-sulfur cluster scaffold protein, is required for biogenesis of ferredoxin and photosystem I.</title>
        <authorList>
            <person name="Yabe T."/>
            <person name="Morimoto K."/>
            <person name="Kikuchi S."/>
            <person name="Nishio K."/>
            <person name="Terashima I."/>
            <person name="Nakai M."/>
        </authorList>
    </citation>
    <scope>FUNCTION</scope>
    <scope>COFACTOR</scope>
    <scope>SUBUNIT</scope>
    <scope>SUBCELLULAR LOCATION</scope>
    <scope>TISSUE SPECIFICITY</scope>
    <scope>DISRUPTION PHENOTYPE</scope>
</reference>
<reference key="8">
    <citation type="journal article" date="2004" name="Plant J.">
        <title>Nfu2: a scaffold protein required for [4Fe-4S] and ferredoxin iron-sulphur cluster assembly in Arabidopsis chloroplasts.</title>
        <authorList>
            <person name="Touraine B."/>
            <person name="Boutin J.-P."/>
            <person name="Marion-Poll A."/>
            <person name="Briat J.-F."/>
            <person name="Peltier G."/>
            <person name="Lobreaux S."/>
        </authorList>
    </citation>
    <scope>FUNCTION</scope>
</reference>
<reference key="9">
    <citation type="journal article" date="2008" name="J. Mol. Biol.">
        <title>Structural analysis of Arabidopsis CnfU protein: an iron-sulfur cluster biosynthetic scaffold in chloroplasts.</title>
        <authorList>
            <person name="Yabe T."/>
            <person name="Yamashita E."/>
            <person name="Kikuchi A."/>
            <person name="Morimoto K."/>
            <person name="Nakagawa A."/>
            <person name="Tsukihara T."/>
            <person name="Nakai M."/>
        </authorList>
    </citation>
    <scope>X-RAY CRYSTALLOGRAPHY (1.35 ANGSTROMS) OF 83-235</scope>
    <scope>SUBUNIT</scope>
    <scope>DISULFIDE BONDS</scope>
</reference>
<sequence length="235" mass="25620">MQLLTLNPAAISRTPPQAIDPSSSSSLLLPFPQILSSQRALGLVARPCNPLRRGLSRFLSSRQLFRRSKVVKAVATPDPILEVPLTEENVESVLDEIRPYLMSDGGNVALHEIDGNIVRVKLQGACGSCPSSTMTMKMGIERRLMEKIPEIVAVEALPDEETGLELNEENIEKVLEEIRPYLIGTADGSLDLVEIEDPIVKIRITGPAAGVMTVRVAVTQKLREKIPSIAAVQLI</sequence>
<dbReference type="EMBL" id="AJ512934">
    <property type="protein sequence ID" value="CAD55559.1"/>
    <property type="molecule type" value="mRNA"/>
</dbReference>
<dbReference type="EMBL" id="AB024032">
    <property type="protein sequence ID" value="BAA97015.1"/>
    <property type="status" value="ALT_SEQ"/>
    <property type="molecule type" value="Genomic_DNA"/>
</dbReference>
<dbReference type="EMBL" id="CP002688">
    <property type="protein sequence ID" value="AED95873.1"/>
    <property type="molecule type" value="Genomic_DNA"/>
</dbReference>
<dbReference type="EMBL" id="CP002688">
    <property type="protein sequence ID" value="AED95874.1"/>
    <property type="molecule type" value="Genomic_DNA"/>
</dbReference>
<dbReference type="EMBL" id="AK316745">
    <property type="protein sequence ID" value="BAH19468.1"/>
    <property type="molecule type" value="mRNA"/>
</dbReference>
<dbReference type="EMBL" id="AF370353">
    <property type="protein sequence ID" value="AAK44168.1"/>
    <property type="molecule type" value="mRNA"/>
</dbReference>
<dbReference type="EMBL" id="AF428399">
    <property type="protein sequence ID" value="AAL16167.1"/>
    <property type="molecule type" value="mRNA"/>
</dbReference>
<dbReference type="EMBL" id="AY062984">
    <property type="protein sequence ID" value="AAL34158.1"/>
    <property type="molecule type" value="mRNA"/>
</dbReference>
<dbReference type="EMBL" id="AK118652">
    <property type="protein sequence ID" value="BAC43248.1"/>
    <property type="molecule type" value="mRNA"/>
</dbReference>
<dbReference type="RefSeq" id="NP_001078739.1">
    <molecule id="Q93W20-2"/>
    <property type="nucleotide sequence ID" value="NM_001085270.2"/>
</dbReference>
<dbReference type="RefSeq" id="NP_568715.1">
    <molecule id="Q93W20-1"/>
    <property type="nucleotide sequence ID" value="NM_124372.5"/>
</dbReference>
<dbReference type="PDB" id="2Z51">
    <property type="method" value="X-ray"/>
    <property type="resolution" value="1.35 A"/>
    <property type="chains" value="A=83-235"/>
</dbReference>
<dbReference type="PDBsum" id="2Z51"/>
<dbReference type="SMR" id="Q93W20"/>
<dbReference type="BioGRID" id="20303">
    <property type="interactions" value="1"/>
</dbReference>
<dbReference type="FunCoup" id="Q93W20">
    <property type="interactions" value="1217"/>
</dbReference>
<dbReference type="STRING" id="3702.Q93W20"/>
<dbReference type="iPTMnet" id="Q93W20"/>
<dbReference type="PaxDb" id="3702-AT5G49940.1"/>
<dbReference type="ProteomicsDB" id="251297">
    <molecule id="Q93W20-1"/>
</dbReference>
<dbReference type="EnsemblPlants" id="AT5G49940.1">
    <molecule id="Q93W20-1"/>
    <property type="protein sequence ID" value="AT5G49940.1"/>
    <property type="gene ID" value="AT5G49940"/>
</dbReference>
<dbReference type="EnsemblPlants" id="AT5G49940.2">
    <molecule id="Q93W20-2"/>
    <property type="protein sequence ID" value="AT5G49940.2"/>
    <property type="gene ID" value="AT5G49940"/>
</dbReference>
<dbReference type="GeneID" id="835057"/>
<dbReference type="Gramene" id="AT5G49940.1">
    <molecule id="Q93W20-1"/>
    <property type="protein sequence ID" value="AT5G49940.1"/>
    <property type="gene ID" value="AT5G49940"/>
</dbReference>
<dbReference type="Gramene" id="AT5G49940.2">
    <molecule id="Q93W20-2"/>
    <property type="protein sequence ID" value="AT5G49940.2"/>
    <property type="gene ID" value="AT5G49940"/>
</dbReference>
<dbReference type="KEGG" id="ath:AT5G49940"/>
<dbReference type="Araport" id="AT5G49940"/>
<dbReference type="TAIR" id="AT5G49940">
    <property type="gene designation" value="NFU2"/>
</dbReference>
<dbReference type="eggNOG" id="KOG2358">
    <property type="taxonomic scope" value="Eukaryota"/>
</dbReference>
<dbReference type="HOGENOM" id="CLU_080894_2_0_1"/>
<dbReference type="InParanoid" id="Q93W20"/>
<dbReference type="OMA" id="GHNLARP"/>
<dbReference type="PhylomeDB" id="Q93W20"/>
<dbReference type="EvolutionaryTrace" id="Q93W20"/>
<dbReference type="PRO" id="PR:Q93W20"/>
<dbReference type="Proteomes" id="UP000006548">
    <property type="component" value="Chromosome 5"/>
</dbReference>
<dbReference type="ExpressionAtlas" id="Q93W20">
    <property type="expression patterns" value="baseline and differential"/>
</dbReference>
<dbReference type="GO" id="GO:0009507">
    <property type="term" value="C:chloroplast"/>
    <property type="evidence" value="ECO:0000314"/>
    <property type="project" value="TAIR"/>
</dbReference>
<dbReference type="GO" id="GO:0009570">
    <property type="term" value="C:chloroplast stroma"/>
    <property type="evidence" value="ECO:0007005"/>
    <property type="project" value="TAIR"/>
</dbReference>
<dbReference type="GO" id="GO:0051537">
    <property type="term" value="F:2 iron, 2 sulfur cluster binding"/>
    <property type="evidence" value="ECO:0007669"/>
    <property type="project" value="UniProtKB-KW"/>
</dbReference>
<dbReference type="GO" id="GO:0005506">
    <property type="term" value="F:iron ion binding"/>
    <property type="evidence" value="ECO:0007669"/>
    <property type="project" value="InterPro"/>
</dbReference>
<dbReference type="GO" id="GO:0005198">
    <property type="term" value="F:structural molecule activity"/>
    <property type="evidence" value="ECO:0000304"/>
    <property type="project" value="TAIR"/>
</dbReference>
<dbReference type="GO" id="GO:0009658">
    <property type="term" value="P:chloroplast organization"/>
    <property type="evidence" value="ECO:0000315"/>
    <property type="project" value="TAIR"/>
</dbReference>
<dbReference type="GO" id="GO:0016226">
    <property type="term" value="P:iron-sulfur cluster assembly"/>
    <property type="evidence" value="ECO:0000315"/>
    <property type="project" value="TAIR"/>
</dbReference>
<dbReference type="FunFam" id="3.30.300.130:FF:000003">
    <property type="entry name" value="NifU-like protein 3, chloroplastic"/>
    <property type="match status" value="1"/>
</dbReference>
<dbReference type="FunFam" id="3.30.300.130:FF:000006">
    <property type="entry name" value="NifU-like protein 3, chloroplastic"/>
    <property type="match status" value="1"/>
</dbReference>
<dbReference type="Gene3D" id="3.30.300.130">
    <property type="entry name" value="Fe-S cluster assembly (FSCA)"/>
    <property type="match status" value="2"/>
</dbReference>
<dbReference type="InterPro" id="IPR034904">
    <property type="entry name" value="FSCA_dom_sf"/>
</dbReference>
<dbReference type="InterPro" id="IPR001075">
    <property type="entry name" value="NIF_FeS_clus_asmbl_NifU_C"/>
</dbReference>
<dbReference type="PANTHER" id="PTHR11178">
    <property type="entry name" value="IRON-SULFUR CLUSTER SCAFFOLD PROTEIN NFU-RELATED"/>
    <property type="match status" value="1"/>
</dbReference>
<dbReference type="PANTHER" id="PTHR11178:SF39">
    <property type="entry name" value="NIFU-LIKE PROTEIN 2, CHLOROPLASTIC"/>
    <property type="match status" value="1"/>
</dbReference>
<dbReference type="Pfam" id="PF01106">
    <property type="entry name" value="NifU"/>
    <property type="match status" value="2"/>
</dbReference>
<dbReference type="SUPFAM" id="SSF117916">
    <property type="entry name" value="Fe-S cluster assembly (FSCA) domain-like"/>
    <property type="match status" value="2"/>
</dbReference>
<accession>Q93W20</accession>
<accession>A8MS35</accession>
<accession>Q9LTX6</accession>
<keyword id="KW-0001">2Fe-2S</keyword>
<keyword id="KW-0002">3D-structure</keyword>
<keyword id="KW-0025">Alternative splicing</keyword>
<keyword id="KW-0150">Chloroplast</keyword>
<keyword id="KW-1015">Disulfide bond</keyword>
<keyword id="KW-0408">Iron</keyword>
<keyword id="KW-0411">Iron-sulfur</keyword>
<keyword id="KW-0479">Metal-binding</keyword>
<keyword id="KW-0934">Plastid</keyword>
<keyword id="KW-1185">Reference proteome</keyword>
<keyword id="KW-0809">Transit peptide</keyword>
<gene>
    <name type="primary">NIFU2</name>
    <name type="synonym">CNFU2</name>
    <name type="synonym">NFU2</name>
    <name type="ordered locus">At5g49940</name>
    <name type="ORF">K9P8.16</name>
</gene>
<proteinExistence type="evidence at protein level"/>
<comment type="function">
    <text evidence="3 4">Molecular scaffold for [Fe-S] cluster assembly of chloroplastic iron-sulfur proteins. Required for biogenesis of ferredoxin, a major photosynthetic electron carrier containing [2Fe-2S] cluster. Required for the assembly of photosystem I complex.</text>
</comment>
<comment type="cofactor">
    <cofactor evidence="3">
        <name>[2Fe-2S] cluster</name>
        <dbReference type="ChEBI" id="CHEBI:190135"/>
    </cofactor>
    <text evidence="3">Binds 1 [2Fe-2S] cluster per subunit.</text>
</comment>
<comment type="subunit">
    <text evidence="3 5">Homodimer; disulfide-linked.</text>
</comment>
<comment type="subcellular location">
    <subcellularLocation>
        <location evidence="2 3">Plastid</location>
        <location evidence="2 3">Chloroplast stroma</location>
    </subcellularLocation>
</comment>
<comment type="alternative products">
    <event type="alternative splicing"/>
    <isoform>
        <id>Q93W20-1</id>
        <name>1</name>
        <sequence type="displayed"/>
    </isoform>
    <isoform>
        <id>Q93W20-2</id>
        <name>2</name>
        <sequence type="described" ref="VSP_040522 VSP_040523"/>
    </isoform>
</comment>
<comment type="tissue specificity">
    <text evidence="2 3">Predominantly expressed in leaves and floral stalks. Ubiquitous (at protein level).</text>
</comment>
<comment type="disruption phenotype">
    <text evidence="3">Plants are dwarf with faint pale-green leaves, decreased amount of ferredoxin and impaired photosystem I accumulation.</text>
</comment>
<comment type="miscellaneous">
    <molecule>Isoform 2</molecule>
    <text evidence="7">May be due to a competing donor splice site.</text>
</comment>
<comment type="similarity">
    <text evidence="7">Belongs to the NifU family.</text>
</comment>
<comment type="sequence caution" evidence="7">
    <conflict type="erroneous gene model prediction">
        <sequence resource="EMBL-CDS" id="BAA97015"/>
    </conflict>
    <text>The predicted gene At5g49940 has been split into 2 genes: At5g49940 and At5g49945.</text>
</comment>
<feature type="transit peptide" description="Chloroplast" evidence="1">
    <location>
        <begin position="1"/>
        <end position="16"/>
    </location>
</feature>
<feature type="chain" id="PRO_0000247613" description="NifU-like protein 2, chloroplastic">
    <location>
        <begin position="17"/>
        <end position="235"/>
    </location>
</feature>
<feature type="disulfide bond" description="Interchain (with C-129)" evidence="5">
    <location>
        <position position="126"/>
    </location>
</feature>
<feature type="disulfide bond" description="Interchain (with C-126)" evidence="5">
    <location>
        <position position="129"/>
    </location>
</feature>
<feature type="splice variant" id="VSP_040522" description="In isoform 2." evidence="6">
    <original>LEEIRPYLIGT</original>
    <variation>KFWCWKKSGLT</variation>
    <location>
        <begin position="175"/>
        <end position="185"/>
    </location>
</feature>
<feature type="splice variant" id="VSP_040523" description="In isoform 2." evidence="6">
    <location>
        <begin position="186"/>
        <end position="235"/>
    </location>
</feature>
<feature type="helix" evidence="8">
    <location>
        <begin position="87"/>
        <end position="103"/>
    </location>
</feature>
<feature type="strand" evidence="8">
    <location>
        <begin position="106"/>
        <end position="114"/>
    </location>
</feature>
<feature type="strand" evidence="8">
    <location>
        <begin position="117"/>
        <end position="123"/>
    </location>
</feature>
<feature type="helix" evidence="8">
    <location>
        <begin position="124"/>
        <end position="127"/>
    </location>
</feature>
<feature type="helix" evidence="8">
    <location>
        <begin position="130"/>
        <end position="132"/>
    </location>
</feature>
<feature type="helix" evidence="8">
    <location>
        <begin position="133"/>
        <end position="147"/>
    </location>
</feature>
<feature type="strand" evidence="8">
    <location>
        <begin position="153"/>
        <end position="156"/>
    </location>
</feature>
<feature type="helix" evidence="8">
    <location>
        <begin position="168"/>
        <end position="178"/>
    </location>
</feature>
<feature type="helix" evidence="8">
    <location>
        <begin position="179"/>
        <end position="181"/>
    </location>
</feature>
<feature type="helix" evidence="8">
    <location>
        <begin position="184"/>
        <end position="186"/>
    </location>
</feature>
<feature type="strand" evidence="8">
    <location>
        <begin position="189"/>
        <end position="196"/>
    </location>
</feature>
<feature type="strand" evidence="8">
    <location>
        <begin position="199"/>
        <end position="206"/>
    </location>
</feature>
<feature type="helix" evidence="8">
    <location>
        <begin position="207"/>
        <end position="210"/>
    </location>
</feature>
<feature type="helix" evidence="8">
    <location>
        <begin position="213"/>
        <end position="225"/>
    </location>
</feature>
<feature type="strand" evidence="8">
    <location>
        <begin position="231"/>
        <end position="234"/>
    </location>
</feature>
<protein>
    <recommendedName>
        <fullName>NifU-like protein 2, chloroplastic</fullName>
        <shortName>AtCNfu2</shortName>
        <shortName>AtCnfU-V</shortName>
    </recommendedName>
</protein>
<name>NIFU2_ARATH</name>